<name>PGTA1_ARATH</name>
<comment type="function">
    <text evidence="3">Catalyzes the transfer of a geranylgeranyl moiety from geranylgeranyl diphosphate to both cysteines of Rab proteins with the C-terminal sequence -CCXX, CXXX, -XCCX and -XCXC, such as RABA1A, RABA2A, RABF2A and RABG2 (PubMed:26589801). In vitro, can prenylate PGGTI targets with the C-terminal Cys-aliphatic-aliphatic-X (CaaX) with leucine in the terminal position. Substrates with the C-terminal sequence -CSIL such as ARAC11/ROP1 or GG2/AGG2 are prenylated independently of REP and when the alpha subunit is associated with a beta subunit (RGTB1 or RGTB2) (PubMed:26589801).</text>
</comment>
<comment type="catalytic activity">
    <reaction evidence="3">
        <text>geranylgeranyl diphosphate + L-cysteinyl-[protein] = S-geranylgeranyl-L-cysteinyl-[protein] + diphosphate</text>
        <dbReference type="Rhea" id="RHEA:21240"/>
        <dbReference type="Rhea" id="RHEA-COMP:10131"/>
        <dbReference type="Rhea" id="RHEA-COMP:11537"/>
        <dbReference type="ChEBI" id="CHEBI:29950"/>
        <dbReference type="ChEBI" id="CHEBI:33019"/>
        <dbReference type="ChEBI" id="CHEBI:57533"/>
        <dbReference type="ChEBI" id="CHEBI:86021"/>
        <dbReference type="EC" id="2.5.1.60"/>
    </reaction>
</comment>
<comment type="activity regulation">
    <text evidence="3">The enzymatic reaction requires the aid of the Rab escort protein REP.</text>
</comment>
<comment type="subunit">
    <text evidence="3">Heterotrimer composed of the alpha subunit RGTA, the beta subunit RGTB and REP; within this trimer, RGTA and RGTB form the catalytic component, while REP mediates peptide substrate binding.</text>
</comment>
<comment type="similarity">
    <text evidence="5">Belongs to the protein prenyltransferase subunit alpha family.</text>
</comment>
<comment type="sequence caution" evidence="5">
    <conflict type="erroneous gene model prediction">
        <sequence resource="EMBL-CDS" id="CAA23014"/>
    </conflict>
</comment>
<comment type="sequence caution" evidence="5">
    <conflict type="erroneous gene model prediction">
        <sequence resource="EMBL-CDS" id="CAB45084"/>
    </conflict>
</comment>
<comment type="sequence caution" evidence="5">
    <conflict type="erroneous gene model prediction">
        <sequence resource="EMBL-CDS" id="CAB79359"/>
    </conflict>
</comment>
<reference key="1">
    <citation type="journal article" date="1999" name="Nature">
        <title>Sequence and analysis of chromosome 4 of the plant Arabidopsis thaliana.</title>
        <authorList>
            <person name="Mayer K.F.X."/>
            <person name="Schueller C."/>
            <person name="Wambutt R."/>
            <person name="Murphy G."/>
            <person name="Volckaert G."/>
            <person name="Pohl T."/>
            <person name="Duesterhoeft A."/>
            <person name="Stiekema W."/>
            <person name="Entian K.-D."/>
            <person name="Terryn N."/>
            <person name="Harris B."/>
            <person name="Ansorge W."/>
            <person name="Brandt P."/>
            <person name="Grivell L.A."/>
            <person name="Rieger M."/>
            <person name="Weichselgartner M."/>
            <person name="de Simone V."/>
            <person name="Obermaier B."/>
            <person name="Mache R."/>
            <person name="Mueller M."/>
            <person name="Kreis M."/>
            <person name="Delseny M."/>
            <person name="Puigdomenech P."/>
            <person name="Watson M."/>
            <person name="Schmidtheini T."/>
            <person name="Reichert B."/>
            <person name="Portetelle D."/>
            <person name="Perez-Alonso M."/>
            <person name="Boutry M."/>
            <person name="Bancroft I."/>
            <person name="Vos P."/>
            <person name="Hoheisel J."/>
            <person name="Zimmermann W."/>
            <person name="Wedler H."/>
            <person name="Ridley P."/>
            <person name="Langham S.-A."/>
            <person name="McCullagh B."/>
            <person name="Bilham L."/>
            <person name="Robben J."/>
            <person name="van der Schueren J."/>
            <person name="Grymonprez B."/>
            <person name="Chuang Y.-J."/>
            <person name="Vandenbussche F."/>
            <person name="Braeken M."/>
            <person name="Weltjens I."/>
            <person name="Voet M."/>
            <person name="Bastiaens I."/>
            <person name="Aert R."/>
            <person name="Defoor E."/>
            <person name="Weitzenegger T."/>
            <person name="Bothe G."/>
            <person name="Ramsperger U."/>
            <person name="Hilbert H."/>
            <person name="Braun M."/>
            <person name="Holzer E."/>
            <person name="Brandt A."/>
            <person name="Peters S."/>
            <person name="van Staveren M."/>
            <person name="Dirkse W."/>
            <person name="Mooijman P."/>
            <person name="Klein Lankhorst R."/>
            <person name="Rose M."/>
            <person name="Hauf J."/>
            <person name="Koetter P."/>
            <person name="Berneiser S."/>
            <person name="Hempel S."/>
            <person name="Feldpausch M."/>
            <person name="Lamberth S."/>
            <person name="Van den Daele H."/>
            <person name="De Keyser A."/>
            <person name="Buysshaert C."/>
            <person name="Gielen J."/>
            <person name="Villarroel R."/>
            <person name="De Clercq R."/>
            <person name="van Montagu M."/>
            <person name="Rogers J."/>
            <person name="Cronin A."/>
            <person name="Quail M.A."/>
            <person name="Bray-Allen S."/>
            <person name="Clark L."/>
            <person name="Doggett J."/>
            <person name="Hall S."/>
            <person name="Kay M."/>
            <person name="Lennard N."/>
            <person name="McLay K."/>
            <person name="Mayes R."/>
            <person name="Pettett A."/>
            <person name="Rajandream M.A."/>
            <person name="Lyne M."/>
            <person name="Benes V."/>
            <person name="Rechmann S."/>
            <person name="Borkova D."/>
            <person name="Bloecker H."/>
            <person name="Scharfe M."/>
            <person name="Grimm M."/>
            <person name="Loehnert T.-H."/>
            <person name="Dose S."/>
            <person name="de Haan M."/>
            <person name="Maarse A.C."/>
            <person name="Schaefer M."/>
            <person name="Mueller-Auer S."/>
            <person name="Gabel C."/>
            <person name="Fuchs M."/>
            <person name="Fartmann B."/>
            <person name="Granderath K."/>
            <person name="Dauner D."/>
            <person name="Herzl A."/>
            <person name="Neumann S."/>
            <person name="Argiriou A."/>
            <person name="Vitale D."/>
            <person name="Liguori R."/>
            <person name="Piravandi E."/>
            <person name="Massenet O."/>
            <person name="Quigley F."/>
            <person name="Clabauld G."/>
            <person name="Muendlein A."/>
            <person name="Felber R."/>
            <person name="Schnabl S."/>
            <person name="Hiller R."/>
            <person name="Schmidt W."/>
            <person name="Lecharny A."/>
            <person name="Aubourg S."/>
            <person name="Chefdor F."/>
            <person name="Cooke R."/>
            <person name="Berger C."/>
            <person name="Monfort A."/>
            <person name="Casacuberta E."/>
            <person name="Gibbons T."/>
            <person name="Weber N."/>
            <person name="Vandenbol M."/>
            <person name="Bargues M."/>
            <person name="Terol J."/>
            <person name="Torres A."/>
            <person name="Perez-Perez A."/>
            <person name="Purnelle B."/>
            <person name="Bent E."/>
            <person name="Johnson S."/>
            <person name="Tacon D."/>
            <person name="Jesse T."/>
            <person name="Heijnen L."/>
            <person name="Schwarz S."/>
            <person name="Scholler P."/>
            <person name="Heber S."/>
            <person name="Francs P."/>
            <person name="Bielke C."/>
            <person name="Frishman D."/>
            <person name="Haase D."/>
            <person name="Lemcke K."/>
            <person name="Mewes H.-W."/>
            <person name="Stocker S."/>
            <person name="Zaccaria P."/>
            <person name="Bevan M."/>
            <person name="Wilson R.K."/>
            <person name="de la Bastide M."/>
            <person name="Habermann K."/>
            <person name="Parnell L."/>
            <person name="Dedhia N."/>
            <person name="Gnoj L."/>
            <person name="Schutz K."/>
            <person name="Huang E."/>
            <person name="Spiegel L."/>
            <person name="Sekhon M."/>
            <person name="Murray J."/>
            <person name="Sheet P."/>
            <person name="Cordes M."/>
            <person name="Abu-Threideh J."/>
            <person name="Stoneking T."/>
            <person name="Kalicki J."/>
            <person name="Graves T."/>
            <person name="Harmon G."/>
            <person name="Edwards J."/>
            <person name="Latreille P."/>
            <person name="Courtney L."/>
            <person name="Cloud J."/>
            <person name="Abbott A."/>
            <person name="Scott K."/>
            <person name="Johnson D."/>
            <person name="Minx P."/>
            <person name="Bentley D."/>
            <person name="Fulton B."/>
            <person name="Miller N."/>
            <person name="Greco T."/>
            <person name="Kemp K."/>
            <person name="Kramer J."/>
            <person name="Fulton L."/>
            <person name="Mardis E."/>
            <person name="Dante M."/>
            <person name="Pepin K."/>
            <person name="Hillier L.W."/>
            <person name="Nelson J."/>
            <person name="Spieth J."/>
            <person name="Ryan E."/>
            <person name="Andrews S."/>
            <person name="Geisel C."/>
            <person name="Layman D."/>
            <person name="Du H."/>
            <person name="Ali J."/>
            <person name="Berghoff A."/>
            <person name="Jones K."/>
            <person name="Drone K."/>
            <person name="Cotton M."/>
            <person name="Joshu C."/>
            <person name="Antonoiu B."/>
            <person name="Zidanic M."/>
            <person name="Strong C."/>
            <person name="Sun H."/>
            <person name="Lamar B."/>
            <person name="Yordan C."/>
            <person name="Ma P."/>
            <person name="Zhong J."/>
            <person name="Preston R."/>
            <person name="Vil D."/>
            <person name="Shekher M."/>
            <person name="Matero A."/>
            <person name="Shah R."/>
            <person name="Swaby I.K."/>
            <person name="O'Shaughnessy A."/>
            <person name="Rodriguez M."/>
            <person name="Hoffman J."/>
            <person name="Till S."/>
            <person name="Granat S."/>
            <person name="Shohdy N."/>
            <person name="Hasegawa A."/>
            <person name="Hameed A."/>
            <person name="Lodhi M."/>
            <person name="Johnson A."/>
            <person name="Chen E."/>
            <person name="Marra M.A."/>
            <person name="Martienssen R."/>
            <person name="McCombie W.R."/>
        </authorList>
    </citation>
    <scope>NUCLEOTIDE SEQUENCE [LARGE SCALE GENOMIC DNA]</scope>
    <source>
        <strain>cv. Columbia</strain>
    </source>
</reference>
<reference key="2">
    <citation type="journal article" date="2017" name="Plant J.">
        <title>Araport11: a complete reannotation of the Arabidopsis thaliana reference genome.</title>
        <authorList>
            <person name="Cheng C.Y."/>
            <person name="Krishnakumar V."/>
            <person name="Chan A.P."/>
            <person name="Thibaud-Nissen F."/>
            <person name="Schobel S."/>
            <person name="Town C.D."/>
        </authorList>
    </citation>
    <scope>GENOME REANNOTATION</scope>
    <source>
        <strain>cv. Columbia</strain>
    </source>
</reference>
<reference key="3">
    <citation type="journal article" date="2003" name="Science">
        <title>Empirical analysis of transcriptional activity in the Arabidopsis genome.</title>
        <authorList>
            <person name="Yamada K."/>
            <person name="Lim J."/>
            <person name="Dale J.M."/>
            <person name="Chen H."/>
            <person name="Shinn P."/>
            <person name="Palm C.J."/>
            <person name="Southwick A.M."/>
            <person name="Wu H.C."/>
            <person name="Kim C.J."/>
            <person name="Nguyen M."/>
            <person name="Pham P.K."/>
            <person name="Cheuk R.F."/>
            <person name="Karlin-Newmann G."/>
            <person name="Liu S.X."/>
            <person name="Lam B."/>
            <person name="Sakano H."/>
            <person name="Wu T."/>
            <person name="Yu G."/>
            <person name="Miranda M."/>
            <person name="Quach H.L."/>
            <person name="Tripp M."/>
            <person name="Chang C.H."/>
            <person name="Lee J.M."/>
            <person name="Toriumi M.J."/>
            <person name="Chan M.M."/>
            <person name="Tang C.C."/>
            <person name="Onodera C.S."/>
            <person name="Deng J.M."/>
            <person name="Akiyama K."/>
            <person name="Ansari Y."/>
            <person name="Arakawa T."/>
            <person name="Banh J."/>
            <person name="Banno F."/>
            <person name="Bowser L."/>
            <person name="Brooks S.Y."/>
            <person name="Carninci P."/>
            <person name="Chao Q."/>
            <person name="Choy N."/>
            <person name="Enju A."/>
            <person name="Goldsmith A.D."/>
            <person name="Gurjal M."/>
            <person name="Hansen N.F."/>
            <person name="Hayashizaki Y."/>
            <person name="Johnson-Hopson C."/>
            <person name="Hsuan V.W."/>
            <person name="Iida K."/>
            <person name="Karnes M."/>
            <person name="Khan S."/>
            <person name="Koesema E."/>
            <person name="Ishida J."/>
            <person name="Jiang P.X."/>
            <person name="Jones T."/>
            <person name="Kawai J."/>
            <person name="Kamiya A."/>
            <person name="Meyers C."/>
            <person name="Nakajima M."/>
            <person name="Narusaka M."/>
            <person name="Seki M."/>
            <person name="Sakurai T."/>
            <person name="Satou M."/>
            <person name="Tamse R."/>
            <person name="Vaysberg M."/>
            <person name="Wallender E.K."/>
            <person name="Wong C."/>
            <person name="Yamamura Y."/>
            <person name="Yuan S."/>
            <person name="Shinozaki K."/>
            <person name="Davis R.W."/>
            <person name="Theologis A."/>
            <person name="Ecker J.R."/>
        </authorList>
    </citation>
    <scope>NUCLEOTIDE SEQUENCE [LARGE SCALE MRNA]</scope>
    <source>
        <strain>cv. Columbia</strain>
    </source>
</reference>
<reference key="4">
    <citation type="journal article" date="2009" name="DNA Res.">
        <title>Analysis of multiple occurrences of alternative splicing events in Arabidopsis thaliana using novel sequenced full-length cDNAs.</title>
        <authorList>
            <person name="Iida K."/>
            <person name="Fukami-Kobayashi K."/>
            <person name="Toyoda A."/>
            <person name="Sakaki Y."/>
            <person name="Kobayashi M."/>
            <person name="Seki M."/>
            <person name="Shinozaki K."/>
        </authorList>
    </citation>
    <scope>NUCLEOTIDE SEQUENCE [LARGE SCALE MRNA] OF 216-678</scope>
    <source>
        <strain>cv. Columbia</strain>
    </source>
</reference>
<reference key="5">
    <citation type="journal article" date="2016" name="J. Biol. Chem.">
        <title>Arabidopsis Rab geranylgeranyltransferases demonstrate redundancy and broad substrate specificity in vitro.</title>
        <authorList>
            <person name="Shi W."/>
            <person name="Zeng Q."/>
            <person name="Kunkel B.N."/>
            <person name="Running M.P."/>
        </authorList>
    </citation>
    <scope>FUNCTION</scope>
    <scope>CATALYTIC ACTIVITY</scope>
    <scope>ACTIVITY REGULATION</scope>
    <scope>SUBUNIT</scope>
</reference>
<keyword id="KW-0433">Leucine-rich repeat</keyword>
<keyword id="KW-0637">Prenyltransferase</keyword>
<keyword id="KW-1185">Reference proteome</keyword>
<keyword id="KW-0677">Repeat</keyword>
<keyword id="KW-0808">Transferase</keyword>
<organism>
    <name type="scientific">Arabidopsis thaliana</name>
    <name type="common">Mouse-ear cress</name>
    <dbReference type="NCBI Taxonomy" id="3702"/>
    <lineage>
        <taxon>Eukaryota</taxon>
        <taxon>Viridiplantae</taxon>
        <taxon>Streptophyta</taxon>
        <taxon>Embryophyta</taxon>
        <taxon>Tracheophyta</taxon>
        <taxon>Spermatophyta</taxon>
        <taxon>Magnoliopsida</taxon>
        <taxon>eudicotyledons</taxon>
        <taxon>Gunneridae</taxon>
        <taxon>Pentapetalae</taxon>
        <taxon>rosids</taxon>
        <taxon>malvids</taxon>
        <taxon>Brassicales</taxon>
        <taxon>Brassicaceae</taxon>
        <taxon>Camelineae</taxon>
        <taxon>Arabidopsis</taxon>
    </lineage>
</organism>
<evidence type="ECO:0000255" key="1"/>
<evidence type="ECO:0000255" key="2">
    <source>
        <dbReference type="PROSITE-ProRule" id="PRU00488"/>
    </source>
</evidence>
<evidence type="ECO:0000269" key="3">
    <source>
    </source>
</evidence>
<evidence type="ECO:0000303" key="4">
    <source>
    </source>
</evidence>
<evidence type="ECO:0000305" key="5"/>
<evidence type="ECO:0000312" key="6">
    <source>
        <dbReference type="Araport" id="AT4G24490"/>
    </source>
</evidence>
<evidence type="ECO:0000312" key="7">
    <source>
        <dbReference type="EMBL" id="CAA23014.1"/>
    </source>
</evidence>
<evidence type="ECO:0000312" key="8">
    <source>
        <dbReference type="EMBL" id="CAB45084.1"/>
    </source>
</evidence>
<feature type="chain" id="PRO_0000436609" description="Geranylgeranyl transferase type-2 subunit alpha 1">
    <location>
        <begin position="1"/>
        <end position="678"/>
    </location>
</feature>
<feature type="repeat" description="PFTA 1" evidence="2">
    <location>
        <begin position="40"/>
        <end position="74"/>
    </location>
</feature>
<feature type="repeat" description="PFTA 2" evidence="2">
    <location>
        <begin position="86"/>
        <end position="120"/>
    </location>
</feature>
<feature type="repeat" description="PFTA 3" evidence="2">
    <location>
        <begin position="121"/>
        <end position="155"/>
    </location>
</feature>
<feature type="repeat" description="PFTA 4" evidence="2">
    <location>
        <begin position="156"/>
        <end position="190"/>
    </location>
</feature>
<feature type="repeat" description="PFTA 5" evidence="2">
    <location>
        <begin position="201"/>
        <end position="235"/>
    </location>
</feature>
<feature type="repeat" description="LRR 1" evidence="1">
    <location>
        <begin position="510"/>
        <end position="532"/>
    </location>
</feature>
<feature type="repeat" description="LRR 2" evidence="1">
    <location>
        <begin position="533"/>
        <end position="554"/>
    </location>
</feature>
<feature type="repeat" description="LRR 3" evidence="1">
    <location>
        <begin position="555"/>
        <end position="578"/>
    </location>
</feature>
<feature type="repeat" description="LRR 4" evidence="1">
    <location>
        <begin position="580"/>
        <end position="604"/>
    </location>
</feature>
<feature type="repeat" description="LRR 5" evidence="1">
    <location>
        <begin position="638"/>
        <end position="663"/>
    </location>
</feature>
<protein>
    <recommendedName>
        <fullName evidence="5">Geranylgeranyl transferase type-2 subunit alpha 1</fullName>
        <ecNumber evidence="3">2.5.1.60</ecNumber>
    </recommendedName>
    <alternativeName>
        <fullName evidence="5">Geranylgeranyl transferase type II subunit alpha 1</fullName>
    </alternativeName>
    <alternativeName>
        <fullName evidence="4">Rab geranylgeranyl transferase alpha subunit 1</fullName>
        <shortName evidence="4">AtRGTA1</shortName>
        <shortName evidence="5">Rab-GGT alpha 1</shortName>
    </alternativeName>
</protein>
<sequence length="678" mass="76909">MHGRPRNASKPEEEAASAAKAVQLRSLQSQFMTNHHDKIYTNEAIELSTKLLEINPEAYTAWNYRKLAVEDRLARIEPDPNLVSAILDEELRVVESALRQNFKSYGAWHHRKWVLSKGHSSVGNELRLLEKFQKLDSRNFHAWNYRRFVVELTNRSEQDELQYTDDMINNNFSNYSAWHNRSVLLSSLLAQNADGFMPNIKIPEEYDFVHSAIFTEPDDQSGWFYHLWLLDQTLNVETPLLTSSWPSHGSSIILSGAGCLSGSSSMFTTFCSESGSFPLILYFDQAVGGVSSSTVTIDSELKGNEGLVWEPIPNKNSQVSCVWVARLKYVSSDPCEYKVKIRVGNSPGIVSSRGYNFNAPYEFVFTAHVHDTVEDSQEGIVSWTDGFDIWDAKSKDLNSLVTLDRLNAEMDFKWRQEAIDSEVECFGILPDSKIGKLTLARLLMAREAMVSDDAVKGVHYEEILQLYNDLMALDSSHYQYYKDEHSKAFLHKVTSSSESLSRHLLRYRDMNNLVCLRLNNLSLSRIASVEKLLFVQMLDLSHNELHSTEGLEAMQLLSCLNLSHNRIRSFSALDSLRHVKQLKVLDVSHNHIGKHSVDTTRYLCSSPLSNSELGQDDVGKQNPGLVTKYWDAYCVLTDLNLKQLDIAGNEIAGEEFSSFVLQVVPKLVWLDGQKKLGN</sequence>
<proteinExistence type="evidence at protein level"/>
<gene>
    <name evidence="4" type="primary">RGTA1</name>
    <name evidence="6" type="ordered locus">At4g24490</name>
    <name evidence="7" type="ORF">F22K18.310</name>
    <name evidence="8" type="ORF">T22A6.320</name>
</gene>
<dbReference type="EC" id="2.5.1.60" evidence="3"/>
<dbReference type="EMBL" id="AL035356">
    <property type="protein sequence ID" value="CAA23014.1"/>
    <property type="status" value="ALT_SEQ"/>
    <property type="molecule type" value="Genomic_DNA"/>
</dbReference>
<dbReference type="EMBL" id="AL078637">
    <property type="protein sequence ID" value="CAB45084.1"/>
    <property type="status" value="ALT_SEQ"/>
    <property type="molecule type" value="Genomic_DNA"/>
</dbReference>
<dbReference type="EMBL" id="AL161561">
    <property type="protein sequence ID" value="CAB79359.1"/>
    <property type="status" value="ALT_SEQ"/>
    <property type="molecule type" value="Genomic_DNA"/>
</dbReference>
<dbReference type="EMBL" id="CP002687">
    <property type="protein sequence ID" value="AEE84913.1"/>
    <property type="molecule type" value="Genomic_DNA"/>
</dbReference>
<dbReference type="EMBL" id="CP002687">
    <property type="protein sequence ID" value="AEE84914.1"/>
    <property type="molecule type" value="Genomic_DNA"/>
</dbReference>
<dbReference type="EMBL" id="AY072209">
    <property type="protein sequence ID" value="AAL60030.1"/>
    <property type="molecule type" value="mRNA"/>
</dbReference>
<dbReference type="EMBL" id="AY117358">
    <property type="protein sequence ID" value="AAM51433.1"/>
    <property type="molecule type" value="mRNA"/>
</dbReference>
<dbReference type="EMBL" id="AK317624">
    <property type="protein sequence ID" value="BAH20286.1"/>
    <property type="molecule type" value="mRNA"/>
</dbReference>
<dbReference type="PIR" id="C85282">
    <property type="entry name" value="C85282"/>
</dbReference>
<dbReference type="PIR" id="T05585">
    <property type="entry name" value="T05585"/>
</dbReference>
<dbReference type="PIR" id="T09912">
    <property type="entry name" value="T09912"/>
</dbReference>
<dbReference type="RefSeq" id="NP_001078443.1">
    <property type="nucleotide sequence ID" value="NM_001084974.1"/>
</dbReference>
<dbReference type="RefSeq" id="NP_194180.2">
    <property type="nucleotide sequence ID" value="NM_118582.4"/>
</dbReference>
<dbReference type="SMR" id="Q8VYB7"/>
<dbReference type="FunCoup" id="Q8VYB7">
    <property type="interactions" value="3390"/>
</dbReference>
<dbReference type="STRING" id="3702.Q8VYB7"/>
<dbReference type="PaxDb" id="3702-AT4G24490.1"/>
<dbReference type="ProteomicsDB" id="235050"/>
<dbReference type="EnsemblPlants" id="AT4G24490.1">
    <property type="protein sequence ID" value="AT4G24490.1"/>
    <property type="gene ID" value="AT4G24490"/>
</dbReference>
<dbReference type="EnsemblPlants" id="AT4G24490.2">
    <property type="protein sequence ID" value="AT4G24490.2"/>
    <property type="gene ID" value="AT4G24490"/>
</dbReference>
<dbReference type="GeneID" id="828551"/>
<dbReference type="Gramene" id="AT4G24490.1">
    <property type="protein sequence ID" value="AT4G24490.1"/>
    <property type="gene ID" value="AT4G24490"/>
</dbReference>
<dbReference type="Gramene" id="AT4G24490.2">
    <property type="protein sequence ID" value="AT4G24490.2"/>
    <property type="gene ID" value="AT4G24490"/>
</dbReference>
<dbReference type="KEGG" id="ath:AT4G24490"/>
<dbReference type="Araport" id="AT4G24490"/>
<dbReference type="TAIR" id="AT4G24490">
    <property type="gene designation" value="RGTA1"/>
</dbReference>
<dbReference type="eggNOG" id="KOG0529">
    <property type="taxonomic scope" value="Eukaryota"/>
</dbReference>
<dbReference type="HOGENOM" id="CLU_024090_0_0_1"/>
<dbReference type="InParanoid" id="Q8VYB7"/>
<dbReference type="OMA" id="YNEIGSH"/>
<dbReference type="PhylomeDB" id="Q8VYB7"/>
<dbReference type="BRENDA" id="2.5.1.60">
    <property type="organism ID" value="399"/>
</dbReference>
<dbReference type="PRO" id="PR:Q8VYB7"/>
<dbReference type="Proteomes" id="UP000006548">
    <property type="component" value="Chromosome 4"/>
</dbReference>
<dbReference type="ExpressionAtlas" id="Q8VYB7">
    <property type="expression patterns" value="baseline and differential"/>
</dbReference>
<dbReference type="GO" id="GO:0005968">
    <property type="term" value="C:Rab-protein geranylgeranyltransferase complex"/>
    <property type="evidence" value="ECO:0000314"/>
    <property type="project" value="UniProtKB"/>
</dbReference>
<dbReference type="GO" id="GO:0004663">
    <property type="term" value="F:Rab geranylgeranyltransferase activity"/>
    <property type="evidence" value="ECO:0000314"/>
    <property type="project" value="UniProtKB"/>
</dbReference>
<dbReference type="GO" id="GO:0018344">
    <property type="term" value="P:protein geranylgeranylation"/>
    <property type="evidence" value="ECO:0000314"/>
    <property type="project" value="UniProtKB"/>
</dbReference>
<dbReference type="FunFam" id="1.25.40.120:FF:000013">
    <property type="entry name" value="Geranylgeranyl transferase type-2 subunit alpha"/>
    <property type="match status" value="1"/>
</dbReference>
<dbReference type="FunFam" id="3.80.10.10:FF:002535">
    <property type="entry name" value="Geranylgeranyl transferase type-2 subunit alpha 1"/>
    <property type="match status" value="1"/>
</dbReference>
<dbReference type="Gene3D" id="1.25.40.120">
    <property type="entry name" value="Protein prenylyltransferase"/>
    <property type="match status" value="1"/>
</dbReference>
<dbReference type="Gene3D" id="3.80.10.10">
    <property type="entry name" value="Ribonuclease Inhibitor"/>
    <property type="match status" value="1"/>
</dbReference>
<dbReference type="InterPro" id="IPR001611">
    <property type="entry name" value="Leu-rich_rpt"/>
</dbReference>
<dbReference type="InterPro" id="IPR032675">
    <property type="entry name" value="LRR_dom_sf"/>
</dbReference>
<dbReference type="InterPro" id="IPR002088">
    <property type="entry name" value="Prenyl_trans_a"/>
</dbReference>
<dbReference type="PANTHER" id="PTHR11129:SF2">
    <property type="entry name" value="GERANYLGERANYL TRANSFERASE TYPE-2 SUBUNIT ALPHA"/>
    <property type="match status" value="1"/>
</dbReference>
<dbReference type="PANTHER" id="PTHR11129">
    <property type="entry name" value="PROTEIN FARNESYLTRANSFERASE ALPHA SUBUNIT/RAB GERANYLGERANYL TRANSFERASE ALPHA SUBUNIT"/>
    <property type="match status" value="1"/>
</dbReference>
<dbReference type="Pfam" id="PF13516">
    <property type="entry name" value="LRR_6"/>
    <property type="match status" value="1"/>
</dbReference>
<dbReference type="Pfam" id="PF01239">
    <property type="entry name" value="PPTA"/>
    <property type="match status" value="5"/>
</dbReference>
<dbReference type="SUPFAM" id="SSF52058">
    <property type="entry name" value="L domain-like"/>
    <property type="match status" value="1"/>
</dbReference>
<dbReference type="SUPFAM" id="SSF48439">
    <property type="entry name" value="Protein prenylyltransferase"/>
    <property type="match status" value="1"/>
</dbReference>
<dbReference type="PROSITE" id="PS51450">
    <property type="entry name" value="LRR"/>
    <property type="match status" value="5"/>
</dbReference>
<dbReference type="PROSITE" id="PS51147">
    <property type="entry name" value="PFTA"/>
    <property type="match status" value="5"/>
</dbReference>
<accession>Q8VYB7</accession>
<accession>B9DHR9</accession>
<accession>Q9M0L4</accession>
<accession>Q9SB46</accession>
<accession>Q9STU6</accession>